<reference key="1">
    <citation type="journal article" date="1998" name="Extremophiles">
        <title>Isolation and transposon mutagenesis of a Pseudomonas putida KT2442 toluene-resistant variant: involvement of an efflux system in solvent resistance.</title>
        <authorList>
            <person name="Fukumori F."/>
            <person name="Hirayama H."/>
            <person name="Takami H."/>
            <person name="Inoue A."/>
            <person name="Horikoshi K."/>
        </authorList>
    </citation>
    <scope>NUCLEOTIDE SEQUENCE [GENOMIC DNA]</scope>
    <scope>CHARACTERIZATION</scope>
    <source>
        <strain>KT2442-TOL</strain>
    </source>
</reference>
<feature type="chain" id="PRO_0000161851" description="Multidrug/solvent efflux pump membrane transporter MepB">
    <location>
        <begin position="1"/>
        <end position="1050"/>
    </location>
</feature>
<feature type="transmembrane region" description="Helical" evidence="1">
    <location>
        <begin position="10"/>
        <end position="30"/>
    </location>
</feature>
<feature type="transmembrane region" description="Helical" evidence="1">
    <location>
        <begin position="339"/>
        <end position="359"/>
    </location>
</feature>
<feature type="transmembrane region" description="Helical" evidence="1">
    <location>
        <begin position="370"/>
        <end position="390"/>
    </location>
</feature>
<feature type="transmembrane region" description="Helical" evidence="1">
    <location>
        <begin position="393"/>
        <end position="413"/>
    </location>
</feature>
<feature type="transmembrane region" description="Helical" evidence="1">
    <location>
        <begin position="440"/>
        <end position="460"/>
    </location>
</feature>
<feature type="transmembrane region" description="Helical" evidence="1">
    <location>
        <begin position="472"/>
        <end position="492"/>
    </location>
</feature>
<feature type="transmembrane region" description="Helical" evidence="1">
    <location>
        <begin position="539"/>
        <end position="559"/>
    </location>
</feature>
<feature type="transmembrane region" description="Helical" evidence="1">
    <location>
        <begin position="871"/>
        <end position="891"/>
    </location>
</feature>
<feature type="transmembrane region" description="Helical" evidence="1">
    <location>
        <begin position="893"/>
        <end position="913"/>
    </location>
</feature>
<feature type="transmembrane region" description="Helical" evidence="1">
    <location>
        <begin position="923"/>
        <end position="943"/>
    </location>
</feature>
<feature type="transmembrane region" description="Helical" evidence="1">
    <location>
        <begin position="972"/>
        <end position="992"/>
    </location>
</feature>
<feature type="transmembrane region" description="Helical" evidence="1">
    <location>
        <begin position="1004"/>
        <end position="1024"/>
    </location>
</feature>
<protein>
    <recommendedName>
        <fullName>Multidrug/solvent efflux pump membrane transporter MepB</fullName>
    </recommendedName>
</protein>
<organism>
    <name type="scientific">Pseudomonas putida</name>
    <name type="common">Arthrobacter siderocapsulatus</name>
    <dbReference type="NCBI Taxonomy" id="303"/>
    <lineage>
        <taxon>Bacteria</taxon>
        <taxon>Pseudomonadati</taxon>
        <taxon>Pseudomonadota</taxon>
        <taxon>Gammaproteobacteria</taxon>
        <taxon>Pseudomonadales</taxon>
        <taxon>Pseudomonadaceae</taxon>
        <taxon>Pseudomonas</taxon>
    </lineage>
</organism>
<accession>P0C070</accession>
<sequence length="1050" mass="112836">MSKFFIDRPIFAWVIALVIMLVGALSILKLPINQYPSIAPPAIAIAVTYPGASAQTVQDTVVQVIEQQLNGIDNLRYVSSESNSDGSMTITATFEQGTNPDTAQVQVQNKLNLATPLLPQEVQQQGIRVTKAVKNFLLVIGLVSEDGSMTKDDLANYIVSNMQDPISRTAGVGDFQVFGAQYAMRIWLDPAKLNKFQLTPVDVKTAVAAQNVQVSSGQLGGLPALPGTQLNATIIGKTRLQTAEQFESILLKVNKDGSQVRLGDVAQVGLGGENYAVSAQFNGKPASGLAVKLATGANALDTAKALRETIKGLEPFFPPGVKAVFPYDTTPVVTESISGVIHTLIEAVVLVFLVMYLFLQNFRATIITTMTVPVVLLGTFGILAAAGFSINTLTMFAMVLAIGLLVDDAIVVVENVERVMSEEGLPPKEATKRSMEQIQGALVGIALVLSAVLLPMAFFGGSTGVIYRQFSITIVSAMGLSVLVALIFTPALCATMLKPLKKGEHHTAKGGFFGWFNRNFDRSVNGYERSVGAILRNKVPFLLAYALIVVGMIWLFARIPTAFLPEEDQGVLFAQVQTPAGSSAERTQVVVDQMREYLLKDEADTVSSVFTVNGFNFAGRGQSSGMAFIMLKPWDERSKENSVFALAQRAQQHFFTFRDAMVFAFAPPAVLELGNATGFDVFLQDRGGVGHEKLMEARNQFLAKAAQSKILSAVRPNGLNDEPQYQLTIDDERASALGVTIADINNTLSIALGASYVNDFIDRGRVKKVYIQGEPSARMSPEDLQKWYVRNGAGEMVPFSSFAKGEWTYGSPKLSRYNGVEAMEILGAPAPGYSTGEAMAEVERIAGELPSGIGFSWTGMSYEEKLSGSQMPALFALSVLFVFLCLAALYESWSIPIAVVLVVPLGIIGALIATSLRGLSNDVYFLVGLLTTIGLAAKNAILIVEFAKELHEQGRSLYDAAIEACRMRLRPIIMTSLAFILGVVPLTIASGAGAGSQHAIGTGVIGGMISATVLAIFWVPLFFVAVSSLFGSKEPEKDVTPENPRYEAGQ</sequence>
<gene>
    <name type="primary">mepB</name>
</gene>
<keyword id="KW-0046">Antibiotic resistance</keyword>
<keyword id="KW-0997">Cell inner membrane</keyword>
<keyword id="KW-1003">Cell membrane</keyword>
<keyword id="KW-0472">Membrane</keyword>
<keyword id="KW-0812">Transmembrane</keyword>
<keyword id="KW-1133">Transmembrane helix</keyword>
<keyword id="KW-0813">Transport</keyword>
<evidence type="ECO:0000255" key="1"/>
<evidence type="ECO:0000305" key="2"/>
<name>MEPB_PSEPU</name>
<proteinExistence type="evidence at protein level"/>
<dbReference type="SMR" id="P0C070"/>
<dbReference type="GO" id="GO:0005886">
    <property type="term" value="C:plasma membrane"/>
    <property type="evidence" value="ECO:0007669"/>
    <property type="project" value="UniProtKB-SubCell"/>
</dbReference>
<dbReference type="GO" id="GO:0015562">
    <property type="term" value="F:efflux transmembrane transporter activity"/>
    <property type="evidence" value="ECO:0007669"/>
    <property type="project" value="InterPro"/>
</dbReference>
<dbReference type="GO" id="GO:0042910">
    <property type="term" value="F:xenobiotic transmembrane transporter activity"/>
    <property type="evidence" value="ECO:0007669"/>
    <property type="project" value="TreeGrafter"/>
</dbReference>
<dbReference type="GO" id="GO:0046677">
    <property type="term" value="P:response to antibiotic"/>
    <property type="evidence" value="ECO:0007669"/>
    <property type="project" value="UniProtKB-KW"/>
</dbReference>
<dbReference type="FunFam" id="1.20.1640.10:FF:000001">
    <property type="entry name" value="Efflux pump membrane transporter"/>
    <property type="match status" value="1"/>
</dbReference>
<dbReference type="FunFam" id="3.30.2090.10:FF:000001">
    <property type="entry name" value="Efflux pump membrane transporter"/>
    <property type="match status" value="1"/>
</dbReference>
<dbReference type="FunFam" id="3.30.2090.10:FF:000002">
    <property type="entry name" value="Efflux pump membrane transporter"/>
    <property type="match status" value="1"/>
</dbReference>
<dbReference type="FunFam" id="3.30.70.1430:FF:000001">
    <property type="entry name" value="Efflux pump membrane transporter"/>
    <property type="match status" value="1"/>
</dbReference>
<dbReference type="FunFam" id="3.30.70.1430:FF:000002">
    <property type="entry name" value="Efflux pump membrane transporter"/>
    <property type="match status" value="1"/>
</dbReference>
<dbReference type="Gene3D" id="3.30.70.1430">
    <property type="entry name" value="Multidrug efflux transporter AcrB pore domain"/>
    <property type="match status" value="2"/>
</dbReference>
<dbReference type="Gene3D" id="3.30.70.1440">
    <property type="entry name" value="Multidrug efflux transporter AcrB pore domain"/>
    <property type="match status" value="1"/>
</dbReference>
<dbReference type="Gene3D" id="3.30.70.1320">
    <property type="entry name" value="Multidrug efflux transporter AcrB pore domain like"/>
    <property type="match status" value="1"/>
</dbReference>
<dbReference type="Gene3D" id="3.30.2090.10">
    <property type="entry name" value="Multidrug efflux transporter AcrB TolC docking domain, DN and DC subdomains"/>
    <property type="match status" value="2"/>
</dbReference>
<dbReference type="Gene3D" id="1.20.1640.10">
    <property type="entry name" value="Multidrug efflux transporter AcrB transmembrane domain"/>
    <property type="match status" value="2"/>
</dbReference>
<dbReference type="InterPro" id="IPR027463">
    <property type="entry name" value="AcrB_DN_DC_subdom"/>
</dbReference>
<dbReference type="InterPro" id="IPR001036">
    <property type="entry name" value="Acrflvin-R"/>
</dbReference>
<dbReference type="InterPro" id="IPR004764">
    <property type="entry name" value="MdtF-like"/>
</dbReference>
<dbReference type="NCBIfam" id="TIGR00915">
    <property type="entry name" value="2A0602"/>
    <property type="match status" value="1"/>
</dbReference>
<dbReference type="NCBIfam" id="NF000282">
    <property type="entry name" value="RND_permease_1"/>
    <property type="match status" value="1"/>
</dbReference>
<dbReference type="PANTHER" id="PTHR32063">
    <property type="match status" value="1"/>
</dbReference>
<dbReference type="PANTHER" id="PTHR32063:SF13">
    <property type="entry name" value="MULTIDRUG EFFLUX PUMP SUBUNIT ACRB-RELATED"/>
    <property type="match status" value="1"/>
</dbReference>
<dbReference type="Pfam" id="PF00873">
    <property type="entry name" value="ACR_tran"/>
    <property type="match status" value="1"/>
</dbReference>
<dbReference type="PRINTS" id="PR00702">
    <property type="entry name" value="ACRIFLAVINRP"/>
</dbReference>
<dbReference type="SUPFAM" id="SSF82693">
    <property type="entry name" value="Multidrug efflux transporter AcrB pore domain, PN1, PN2, PC1 and PC2 subdomains"/>
    <property type="match status" value="4"/>
</dbReference>
<dbReference type="SUPFAM" id="SSF82714">
    <property type="entry name" value="Multidrug efflux transporter AcrB TolC docking domain, DN and DC subdomains"/>
    <property type="match status" value="2"/>
</dbReference>
<dbReference type="SUPFAM" id="SSF82866">
    <property type="entry name" value="Multidrug efflux transporter AcrB transmembrane domain"/>
    <property type="match status" value="2"/>
</dbReference>
<comment type="function">
    <text>The inner membrane transporter component of an organic solvent and antibiotic efflux pump; confers resistance to toluene, hexane, p-xylene, ampicillin, penicillin G, erythromycin, novobiocin and tetracycline.</text>
</comment>
<comment type="subcellular location">
    <subcellularLocation>
        <location evidence="2">Cell inner membrane</location>
        <topology evidence="2">Multi-pass membrane protein</topology>
    </subcellularLocation>
</comment>
<comment type="similarity">
    <text evidence="2">Belongs to the resistance-nodulation-cell division (RND) (TC 2.A.6) family.</text>
</comment>
<comment type="caution">
    <text evidence="2">There are 4 nearly identical operons in various strains of P.putida. This one and the ttgABC operon of strain DOT-T1E function in solvent and antibiotic efflux; however in strain S12 the arpABC operon functions only in antibiotic efflux. This may be due to different protein expression levels. In strain KT2440 the equivalent operon does not seem to function in toluene efflux.</text>
</comment>